<name>PSBD_PLAOC</name>
<keyword id="KW-0007">Acetylation</keyword>
<keyword id="KW-0148">Chlorophyll</keyword>
<keyword id="KW-0150">Chloroplast</keyword>
<keyword id="KW-0157">Chromophore</keyword>
<keyword id="KW-0249">Electron transport</keyword>
<keyword id="KW-0408">Iron</keyword>
<keyword id="KW-0460">Magnesium</keyword>
<keyword id="KW-0472">Membrane</keyword>
<keyword id="KW-0479">Metal-binding</keyword>
<keyword id="KW-0560">Oxidoreductase</keyword>
<keyword id="KW-0597">Phosphoprotein</keyword>
<keyword id="KW-0602">Photosynthesis</keyword>
<keyword id="KW-0604">Photosystem II</keyword>
<keyword id="KW-0934">Plastid</keyword>
<keyword id="KW-0793">Thylakoid</keyword>
<keyword id="KW-0812">Transmembrane</keyword>
<keyword id="KW-1133">Transmembrane helix</keyword>
<keyword id="KW-0813">Transport</keyword>
<reference key="1">
    <citation type="journal article" date="2006" name="BMC Plant Biol.">
        <title>Rapid and accurate pyrosequencing of angiosperm plastid genomes.</title>
        <authorList>
            <person name="Moore M.J."/>
            <person name="Dhingra A."/>
            <person name="Soltis P.S."/>
            <person name="Shaw R."/>
            <person name="Farmerie W.G."/>
            <person name="Folta K.M."/>
            <person name="Soltis D.E."/>
        </authorList>
    </citation>
    <scope>NUCLEOTIDE SEQUENCE [LARGE SCALE GENOMIC DNA]</scope>
</reference>
<geneLocation type="chloroplast"/>
<dbReference type="EC" id="1.10.3.9" evidence="2"/>
<dbReference type="EMBL" id="DQ923116">
    <property type="protein sequence ID" value="ABI49773.1"/>
    <property type="molecule type" value="Genomic_DNA"/>
</dbReference>
<dbReference type="RefSeq" id="YP_740560.1">
    <property type="nucleotide sequence ID" value="NC_008335.1"/>
</dbReference>
<dbReference type="SMR" id="Q09G51"/>
<dbReference type="GeneID" id="4271258"/>
<dbReference type="GO" id="GO:0009535">
    <property type="term" value="C:chloroplast thylakoid membrane"/>
    <property type="evidence" value="ECO:0007669"/>
    <property type="project" value="UniProtKB-SubCell"/>
</dbReference>
<dbReference type="GO" id="GO:0009523">
    <property type="term" value="C:photosystem II"/>
    <property type="evidence" value="ECO:0007669"/>
    <property type="project" value="UniProtKB-KW"/>
</dbReference>
<dbReference type="GO" id="GO:0016168">
    <property type="term" value="F:chlorophyll binding"/>
    <property type="evidence" value="ECO:0007669"/>
    <property type="project" value="UniProtKB-UniRule"/>
</dbReference>
<dbReference type="GO" id="GO:0045156">
    <property type="term" value="F:electron transporter, transferring electrons within the cyclic electron transport pathway of photosynthesis activity"/>
    <property type="evidence" value="ECO:0007669"/>
    <property type="project" value="InterPro"/>
</dbReference>
<dbReference type="GO" id="GO:0005506">
    <property type="term" value="F:iron ion binding"/>
    <property type="evidence" value="ECO:0007669"/>
    <property type="project" value="UniProtKB-UniRule"/>
</dbReference>
<dbReference type="GO" id="GO:0010242">
    <property type="term" value="F:oxygen evolving activity"/>
    <property type="evidence" value="ECO:0007669"/>
    <property type="project" value="UniProtKB-EC"/>
</dbReference>
<dbReference type="GO" id="GO:0009772">
    <property type="term" value="P:photosynthetic electron transport in photosystem II"/>
    <property type="evidence" value="ECO:0007669"/>
    <property type="project" value="InterPro"/>
</dbReference>
<dbReference type="CDD" id="cd09288">
    <property type="entry name" value="Photosystem-II_D2"/>
    <property type="match status" value="1"/>
</dbReference>
<dbReference type="FunFam" id="1.20.85.10:FF:000001">
    <property type="entry name" value="photosystem II D2 protein-like"/>
    <property type="match status" value="1"/>
</dbReference>
<dbReference type="Gene3D" id="1.20.85.10">
    <property type="entry name" value="Photosystem II protein D1-like"/>
    <property type="match status" value="1"/>
</dbReference>
<dbReference type="HAMAP" id="MF_01383">
    <property type="entry name" value="PSII_PsbD_D2"/>
    <property type="match status" value="1"/>
</dbReference>
<dbReference type="InterPro" id="IPR055266">
    <property type="entry name" value="D1/D2"/>
</dbReference>
<dbReference type="InterPro" id="IPR036854">
    <property type="entry name" value="Photo_II_D1/D2_sf"/>
</dbReference>
<dbReference type="InterPro" id="IPR000484">
    <property type="entry name" value="Photo_RC_L/M"/>
</dbReference>
<dbReference type="InterPro" id="IPR055265">
    <property type="entry name" value="Photo_RC_L/M_CS"/>
</dbReference>
<dbReference type="InterPro" id="IPR005868">
    <property type="entry name" value="PSII_PsbD/D2"/>
</dbReference>
<dbReference type="NCBIfam" id="TIGR01152">
    <property type="entry name" value="psbD"/>
    <property type="match status" value="1"/>
</dbReference>
<dbReference type="PANTHER" id="PTHR33149:SF12">
    <property type="entry name" value="PHOTOSYSTEM II D2 PROTEIN"/>
    <property type="match status" value="1"/>
</dbReference>
<dbReference type="PANTHER" id="PTHR33149">
    <property type="entry name" value="PHOTOSYSTEM II PROTEIN D1"/>
    <property type="match status" value="1"/>
</dbReference>
<dbReference type="Pfam" id="PF00124">
    <property type="entry name" value="Photo_RC"/>
    <property type="match status" value="1"/>
</dbReference>
<dbReference type="PRINTS" id="PR00256">
    <property type="entry name" value="REACTNCENTRE"/>
</dbReference>
<dbReference type="SUPFAM" id="SSF81483">
    <property type="entry name" value="Bacterial photosystem II reaction centre, L and M subunits"/>
    <property type="match status" value="1"/>
</dbReference>
<dbReference type="PROSITE" id="PS00244">
    <property type="entry name" value="REACTION_CENTER"/>
    <property type="match status" value="1"/>
</dbReference>
<proteinExistence type="inferred from homology"/>
<gene>
    <name evidence="2" type="primary">psbD</name>
</gene>
<organism>
    <name type="scientific">Platanus occidentalis</name>
    <name type="common">Sycamore</name>
    <name type="synonym">American plane tree</name>
    <dbReference type="NCBI Taxonomy" id="4403"/>
    <lineage>
        <taxon>Eukaryota</taxon>
        <taxon>Viridiplantae</taxon>
        <taxon>Streptophyta</taxon>
        <taxon>Embryophyta</taxon>
        <taxon>Tracheophyta</taxon>
        <taxon>Spermatophyta</taxon>
        <taxon>Magnoliopsida</taxon>
        <taxon>Proteales</taxon>
        <taxon>Platanaceae</taxon>
        <taxon>Platanus</taxon>
    </lineage>
</organism>
<accession>Q09G51</accession>
<protein>
    <recommendedName>
        <fullName evidence="2">Photosystem II D2 protein</fullName>
        <shortName evidence="2">PSII D2 protein</shortName>
        <ecNumber evidence="2">1.10.3.9</ecNumber>
    </recommendedName>
    <alternativeName>
        <fullName evidence="2">Photosystem Q(A) protein</fullName>
    </alternativeName>
</protein>
<evidence type="ECO:0000250" key="1">
    <source>
        <dbReference type="UniProtKB" id="P56761"/>
    </source>
</evidence>
<evidence type="ECO:0000255" key="2">
    <source>
        <dbReference type="HAMAP-Rule" id="MF_01383"/>
    </source>
</evidence>
<sequence length="353" mass="39592">MTIALGRFTKDENDLFDIMDDWLRRDRFVFVGWSGLLLFPCAYFALGGWFTGTTFVTSWYTHGLASSYLEGCNFLTAAVSTPANSLAHSLLLLWGPEAQGDFTRWCQLGGLWTFVALHGAFGLIGFMLRQFELARSVQLRPYNAIAFSAPIAVFVSVFLIYPLGQSGWFFAPSFGVAAIFRFILFFQGFHNWTLNPFHMMGVAGVLGAALLCAIHGATVENTLFEDGDGANTFRAFNPTQAEETYSMVTANRFWSQIFGVAFSNKRWLHFFMLFVPVTGLWMSALGVVGLALNLRAYDFVSQEIRAAEDPEFETFYTKNILLNEGIRAWMAAQDQPHENLIFPEEVLPRGNAL</sequence>
<feature type="initiator methionine" description="Removed" evidence="1">
    <location>
        <position position="1"/>
    </location>
</feature>
<feature type="chain" id="PRO_0000359688" description="Photosystem II D2 protein">
    <location>
        <begin position="2"/>
        <end position="353"/>
    </location>
</feature>
<feature type="transmembrane region" description="Helical" evidence="2">
    <location>
        <begin position="41"/>
        <end position="61"/>
    </location>
</feature>
<feature type="transmembrane region" description="Helical" evidence="2">
    <location>
        <begin position="125"/>
        <end position="141"/>
    </location>
</feature>
<feature type="transmembrane region" description="Helical" evidence="2">
    <location>
        <begin position="153"/>
        <end position="166"/>
    </location>
</feature>
<feature type="transmembrane region" description="Helical" evidence="2">
    <location>
        <begin position="208"/>
        <end position="228"/>
    </location>
</feature>
<feature type="transmembrane region" description="Helical" evidence="2">
    <location>
        <begin position="279"/>
        <end position="295"/>
    </location>
</feature>
<feature type="binding site" description="axial binding residue" evidence="2">
    <location>
        <position position="118"/>
    </location>
    <ligand>
        <name>chlorophyll a</name>
        <dbReference type="ChEBI" id="CHEBI:58416"/>
        <label>ChlzD2</label>
    </ligand>
    <ligandPart>
        <name>Mg</name>
        <dbReference type="ChEBI" id="CHEBI:25107"/>
    </ligandPart>
</feature>
<feature type="binding site" evidence="2">
    <location>
        <position position="130"/>
    </location>
    <ligand>
        <name>pheophytin a</name>
        <dbReference type="ChEBI" id="CHEBI:136840"/>
        <label>D2</label>
    </ligand>
</feature>
<feature type="binding site" evidence="2">
    <location>
        <position position="143"/>
    </location>
    <ligand>
        <name>pheophytin a</name>
        <dbReference type="ChEBI" id="CHEBI:136840"/>
        <label>D2</label>
    </ligand>
</feature>
<feature type="binding site" description="axial binding residue" evidence="2">
    <location>
        <position position="198"/>
    </location>
    <ligand>
        <name>chlorophyll a</name>
        <dbReference type="ChEBI" id="CHEBI:58416"/>
        <label>PD2</label>
    </ligand>
    <ligandPart>
        <name>Mg</name>
        <dbReference type="ChEBI" id="CHEBI:25107"/>
    </ligandPart>
</feature>
<feature type="binding site" evidence="2">
    <location>
        <position position="215"/>
    </location>
    <ligand>
        <name>a plastoquinone</name>
        <dbReference type="ChEBI" id="CHEBI:17757"/>
        <label>Q(A)</label>
    </ligand>
</feature>
<feature type="binding site" evidence="2">
    <location>
        <position position="215"/>
    </location>
    <ligand>
        <name>Fe cation</name>
        <dbReference type="ChEBI" id="CHEBI:24875"/>
        <note>ligand shared with heterodimeric partner</note>
    </ligand>
</feature>
<feature type="binding site" evidence="2">
    <location>
        <position position="262"/>
    </location>
    <ligand>
        <name>a plastoquinone</name>
        <dbReference type="ChEBI" id="CHEBI:17757"/>
        <label>Q(A)</label>
    </ligand>
</feature>
<feature type="binding site" evidence="2">
    <location>
        <position position="269"/>
    </location>
    <ligand>
        <name>Fe cation</name>
        <dbReference type="ChEBI" id="CHEBI:24875"/>
        <note>ligand shared with heterodimeric partner</note>
    </ligand>
</feature>
<feature type="modified residue" description="N-acetylthreonine" evidence="1">
    <location>
        <position position="2"/>
    </location>
</feature>
<feature type="modified residue" description="Phosphothreonine" evidence="1">
    <location>
        <position position="2"/>
    </location>
</feature>
<comment type="function">
    <text evidence="2">Photosystem II (PSII) is a light-driven water:plastoquinone oxidoreductase that uses light energy to abstract electrons from H(2)O, generating O(2) and a proton gradient subsequently used for ATP formation. It consists of a core antenna complex that captures photons, and an electron transfer chain that converts photonic excitation into a charge separation. The D1/D2 (PsbA/PsbD) reaction center heterodimer binds P680, the primary electron donor of PSII as well as several subsequent electron acceptors. D2 is needed for assembly of a stable PSII complex.</text>
</comment>
<comment type="catalytic activity">
    <reaction evidence="2">
        <text>2 a plastoquinone + 4 hnu + 2 H2O = 2 a plastoquinol + O2</text>
        <dbReference type="Rhea" id="RHEA:36359"/>
        <dbReference type="Rhea" id="RHEA-COMP:9561"/>
        <dbReference type="Rhea" id="RHEA-COMP:9562"/>
        <dbReference type="ChEBI" id="CHEBI:15377"/>
        <dbReference type="ChEBI" id="CHEBI:15379"/>
        <dbReference type="ChEBI" id="CHEBI:17757"/>
        <dbReference type="ChEBI" id="CHEBI:30212"/>
        <dbReference type="ChEBI" id="CHEBI:62192"/>
        <dbReference type="EC" id="1.10.3.9"/>
    </reaction>
</comment>
<comment type="cofactor">
    <text evidence="2">The D1/D2 heterodimer binds P680, chlorophylls that are the primary electron donor of PSII, and subsequent electron acceptors. It shares a non-heme iron and each subunit binds pheophytin, quinone, additional chlorophylls, carotenoids and lipids. There is also a Cl(-1) ion associated with D1 and D2, which is required for oxygen evolution. The PSII complex binds additional chlorophylls, carotenoids and specific lipids.</text>
</comment>
<comment type="subunit">
    <text evidence="2">PSII is composed of 1 copy each of membrane proteins PsbA, PsbB, PsbC, PsbD, PsbE, PsbF, PsbH, PsbI, PsbJ, PsbK, PsbL, PsbM, PsbT, PsbX, PsbY, PsbZ, Psb30/Ycf12, at least 3 peripheral proteins of the oxygen-evolving complex and a large number of cofactors. It forms dimeric complexes.</text>
</comment>
<comment type="subcellular location">
    <subcellularLocation>
        <location evidence="2">Plastid</location>
        <location evidence="2">Chloroplast thylakoid membrane</location>
        <topology evidence="2">Multi-pass membrane protein</topology>
    </subcellularLocation>
</comment>
<comment type="miscellaneous">
    <text evidence="2">2 of the reaction center chlorophylls (ChlD1 and ChlD2) are entirely coordinated by water.</text>
</comment>
<comment type="similarity">
    <text evidence="2">Belongs to the reaction center PufL/M/PsbA/D family.</text>
</comment>